<comment type="catalytic activity">
    <reaction evidence="1">
        <text>2-(N(omega)-L-arginino)succinate = fumarate + L-arginine</text>
        <dbReference type="Rhea" id="RHEA:24020"/>
        <dbReference type="ChEBI" id="CHEBI:29806"/>
        <dbReference type="ChEBI" id="CHEBI:32682"/>
        <dbReference type="ChEBI" id="CHEBI:57472"/>
        <dbReference type="EC" id="4.3.2.1"/>
    </reaction>
</comment>
<comment type="pathway">
    <text evidence="1">Amino-acid biosynthesis; L-arginine biosynthesis; L-arginine from L-ornithine and carbamoyl phosphate: step 3/3.</text>
</comment>
<comment type="subcellular location">
    <subcellularLocation>
        <location evidence="1">Cytoplasm</location>
    </subcellularLocation>
</comment>
<comment type="similarity">
    <text evidence="1">Belongs to the lyase 1 family. Argininosuccinate lyase subfamily.</text>
</comment>
<reference key="1">
    <citation type="journal article" date="2006" name="Proc. Natl. Acad. Sci. U.S.A.">
        <title>The partitioned Rhizobium etli genome: genetic and metabolic redundancy in seven interacting replicons.</title>
        <authorList>
            <person name="Gonzalez V."/>
            <person name="Santamaria R.I."/>
            <person name="Bustos P."/>
            <person name="Hernandez-Gonzalez I."/>
            <person name="Medrano-Soto A."/>
            <person name="Moreno-Hagelsieb G."/>
            <person name="Janga S.C."/>
            <person name="Ramirez M.A."/>
            <person name="Jimenez-Jacinto V."/>
            <person name="Collado-Vides J."/>
            <person name="Davila G."/>
        </authorList>
    </citation>
    <scope>NUCLEOTIDE SEQUENCE [LARGE SCALE GENOMIC DNA]</scope>
    <source>
        <strain>ATCC 51251 / DSM 11541 / JCM 21823 / NBRC 15573 / CFN 42</strain>
    </source>
</reference>
<proteinExistence type="inferred from homology"/>
<evidence type="ECO:0000255" key="1">
    <source>
        <dbReference type="HAMAP-Rule" id="MF_00006"/>
    </source>
</evidence>
<gene>
    <name evidence="1" type="primary">argH</name>
    <name type="ordered locus">RHE_CH03796</name>
</gene>
<protein>
    <recommendedName>
        <fullName evidence="1">Argininosuccinate lyase</fullName>
        <shortName evidence="1">ASAL</shortName>
        <ecNumber evidence="1">4.3.2.1</ecNumber>
    </recommendedName>
    <alternativeName>
        <fullName evidence="1">Arginosuccinase</fullName>
    </alternativeName>
</protein>
<accession>Q2K3P2</accession>
<sequence>MAENNTDTKSSNQMWGGRFASGPDAIMEEINASIGFDKKLFAQDIRGSIAHATMLAHQGIISSDDKDKIVHGLNTILSEIESGNFEFSRQLEDIHMNVEARLATLIGPAAGRLHTARSRNDQVALDFRLWVKEELQKTEQMLTGLIAAFLDRAEEHAESVMPGFTHLQTAQPVTFGHHCMAYVEMFGRDRSRVRHAIEHLDESPIGAAALAGTGYPIDRHMTAKALGFREPTRNSIDTVSDRDFAIEFLAIAAIAGMHLSRLAEEIVIWSTPQFGFVRLSDAFSTGSSIMPQKKNPDAAELVRAKTGRINGSLIALLTIMKGLPLAYSKDMQEDKEQVFDAAESLELAIAAMTGMVRDMTVNTARMKAAAGSGFSTATDLADWLVREAGLPFRDAHHVTGRAVALAESKGCDLAELPLSDLQAIHSAITDKVYDVLTVEASVASRKSFGGTAPSEVRKQIAFWRARN</sequence>
<dbReference type="EC" id="4.3.2.1" evidence="1"/>
<dbReference type="EMBL" id="CP000133">
    <property type="protein sequence ID" value="ABC92544.1"/>
    <property type="molecule type" value="Genomic_DNA"/>
</dbReference>
<dbReference type="RefSeq" id="WP_011426996.1">
    <property type="nucleotide sequence ID" value="NC_007761.1"/>
</dbReference>
<dbReference type="SMR" id="Q2K3P2"/>
<dbReference type="KEGG" id="ret:RHE_CH03796"/>
<dbReference type="eggNOG" id="COG0165">
    <property type="taxonomic scope" value="Bacteria"/>
</dbReference>
<dbReference type="HOGENOM" id="CLU_027272_2_3_5"/>
<dbReference type="OrthoDB" id="9769623at2"/>
<dbReference type="UniPathway" id="UPA00068">
    <property type="reaction ID" value="UER00114"/>
</dbReference>
<dbReference type="Proteomes" id="UP000001936">
    <property type="component" value="Chromosome"/>
</dbReference>
<dbReference type="GO" id="GO:0005829">
    <property type="term" value="C:cytosol"/>
    <property type="evidence" value="ECO:0007669"/>
    <property type="project" value="TreeGrafter"/>
</dbReference>
<dbReference type="GO" id="GO:0004056">
    <property type="term" value="F:argininosuccinate lyase activity"/>
    <property type="evidence" value="ECO:0007669"/>
    <property type="project" value="UniProtKB-UniRule"/>
</dbReference>
<dbReference type="GO" id="GO:0042450">
    <property type="term" value="P:arginine biosynthetic process via ornithine"/>
    <property type="evidence" value="ECO:0007669"/>
    <property type="project" value="InterPro"/>
</dbReference>
<dbReference type="GO" id="GO:0006526">
    <property type="term" value="P:L-arginine biosynthetic process"/>
    <property type="evidence" value="ECO:0007669"/>
    <property type="project" value="UniProtKB-UniRule"/>
</dbReference>
<dbReference type="CDD" id="cd01359">
    <property type="entry name" value="Argininosuccinate_lyase"/>
    <property type="match status" value="1"/>
</dbReference>
<dbReference type="FunFam" id="1.10.275.10:FF:000002">
    <property type="entry name" value="Argininosuccinate lyase"/>
    <property type="match status" value="1"/>
</dbReference>
<dbReference type="FunFam" id="1.10.40.30:FF:000001">
    <property type="entry name" value="Argininosuccinate lyase"/>
    <property type="match status" value="1"/>
</dbReference>
<dbReference type="FunFam" id="1.20.200.10:FF:000015">
    <property type="entry name" value="argininosuccinate lyase isoform X2"/>
    <property type="match status" value="1"/>
</dbReference>
<dbReference type="Gene3D" id="1.10.40.30">
    <property type="entry name" value="Fumarase/aspartase (C-terminal domain)"/>
    <property type="match status" value="1"/>
</dbReference>
<dbReference type="Gene3D" id="1.20.200.10">
    <property type="entry name" value="Fumarase/aspartase (Central domain)"/>
    <property type="match status" value="1"/>
</dbReference>
<dbReference type="Gene3D" id="1.10.275.10">
    <property type="entry name" value="Fumarase/aspartase (N-terminal domain)"/>
    <property type="match status" value="1"/>
</dbReference>
<dbReference type="HAMAP" id="MF_00006">
    <property type="entry name" value="Arg_succ_lyase"/>
    <property type="match status" value="1"/>
</dbReference>
<dbReference type="InterPro" id="IPR029419">
    <property type="entry name" value="Arg_succ_lyase_C"/>
</dbReference>
<dbReference type="InterPro" id="IPR009049">
    <property type="entry name" value="Argininosuccinate_lyase"/>
</dbReference>
<dbReference type="InterPro" id="IPR024083">
    <property type="entry name" value="Fumarase/histidase_N"/>
</dbReference>
<dbReference type="InterPro" id="IPR020557">
    <property type="entry name" value="Fumarate_lyase_CS"/>
</dbReference>
<dbReference type="InterPro" id="IPR000362">
    <property type="entry name" value="Fumarate_lyase_fam"/>
</dbReference>
<dbReference type="InterPro" id="IPR022761">
    <property type="entry name" value="Fumarate_lyase_N"/>
</dbReference>
<dbReference type="InterPro" id="IPR008948">
    <property type="entry name" value="L-Aspartase-like"/>
</dbReference>
<dbReference type="NCBIfam" id="TIGR00838">
    <property type="entry name" value="argH"/>
    <property type="match status" value="1"/>
</dbReference>
<dbReference type="PANTHER" id="PTHR43814">
    <property type="entry name" value="ARGININOSUCCINATE LYASE"/>
    <property type="match status" value="1"/>
</dbReference>
<dbReference type="PANTHER" id="PTHR43814:SF1">
    <property type="entry name" value="ARGININOSUCCINATE LYASE"/>
    <property type="match status" value="1"/>
</dbReference>
<dbReference type="Pfam" id="PF14698">
    <property type="entry name" value="ASL_C2"/>
    <property type="match status" value="1"/>
</dbReference>
<dbReference type="Pfam" id="PF00206">
    <property type="entry name" value="Lyase_1"/>
    <property type="match status" value="1"/>
</dbReference>
<dbReference type="PRINTS" id="PR00145">
    <property type="entry name" value="ARGSUCLYASE"/>
</dbReference>
<dbReference type="PRINTS" id="PR00149">
    <property type="entry name" value="FUMRATELYASE"/>
</dbReference>
<dbReference type="SUPFAM" id="SSF48557">
    <property type="entry name" value="L-aspartase-like"/>
    <property type="match status" value="1"/>
</dbReference>
<dbReference type="PROSITE" id="PS00163">
    <property type="entry name" value="FUMARATE_LYASES"/>
    <property type="match status" value="1"/>
</dbReference>
<name>ARLY_RHIEC</name>
<keyword id="KW-0028">Amino-acid biosynthesis</keyword>
<keyword id="KW-0055">Arginine biosynthesis</keyword>
<keyword id="KW-0963">Cytoplasm</keyword>
<keyword id="KW-0456">Lyase</keyword>
<keyword id="KW-1185">Reference proteome</keyword>
<feature type="chain" id="PRO_0000240759" description="Argininosuccinate lyase">
    <location>
        <begin position="1"/>
        <end position="467"/>
    </location>
</feature>
<organism>
    <name type="scientific">Rhizobium etli (strain ATCC 51251 / DSM 11541 / JCM 21823 / NBRC 15573 / CFN 42)</name>
    <dbReference type="NCBI Taxonomy" id="347834"/>
    <lineage>
        <taxon>Bacteria</taxon>
        <taxon>Pseudomonadati</taxon>
        <taxon>Pseudomonadota</taxon>
        <taxon>Alphaproteobacteria</taxon>
        <taxon>Hyphomicrobiales</taxon>
        <taxon>Rhizobiaceae</taxon>
        <taxon>Rhizobium/Agrobacterium group</taxon>
        <taxon>Rhizobium</taxon>
    </lineage>
</organism>